<protein>
    <recommendedName>
        <fullName>Protein DCV1</fullName>
    </recommendedName>
    <alternativeName>
        <fullName>Demands CDC28 kinase activity for viability protein 1</fullName>
    </alternativeName>
</protein>
<feature type="signal peptide" evidence="1">
    <location>
        <begin position="1"/>
        <end position="18"/>
    </location>
</feature>
<feature type="chain" id="PRO_0000014319" description="Protein DCV1">
    <location>
        <begin position="19"/>
        <end position="202"/>
    </location>
</feature>
<feature type="transmembrane region" description="Helical" evidence="1">
    <location>
        <begin position="91"/>
        <end position="107"/>
    </location>
</feature>
<feature type="transmembrane region" description="Helical" evidence="1">
    <location>
        <begin position="137"/>
        <end position="155"/>
    </location>
</feature>
<feature type="transmembrane region" description="Helical" evidence="1">
    <location>
        <begin position="168"/>
        <end position="189"/>
    </location>
</feature>
<sequence>MLNYKLILLFSSFLQLISFSGFMICCLTSPIIRNWGLAQAAGVSYGTFGYCKTLNSFSCSRVRLIYNTSKEILPGPSLERWWLSPKARHTIGGLLISIPVATCLTFISFALPLVIIFLFQTGGTNVSLITSNAILHILTLLSTIFACTVILLLCMHRDPVTISSLYDLVWLANCSLFPLLVIGVHFLSFRFDTSAQSDRKHS</sequence>
<proteinExistence type="inferred from homology"/>
<organism>
    <name type="scientific">Saccharomyces cerevisiae (strain ATCC 204508 / S288c)</name>
    <name type="common">Baker's yeast</name>
    <dbReference type="NCBI Taxonomy" id="559292"/>
    <lineage>
        <taxon>Eukaryota</taxon>
        <taxon>Fungi</taxon>
        <taxon>Dikarya</taxon>
        <taxon>Ascomycota</taxon>
        <taxon>Saccharomycotina</taxon>
        <taxon>Saccharomycetes</taxon>
        <taxon>Saccharomycetales</taxon>
        <taxon>Saccharomycetaceae</taxon>
        <taxon>Saccharomyces</taxon>
    </lineage>
</organism>
<gene>
    <name type="primary">DCV1</name>
    <name type="ordered locus">YFR012W</name>
</gene>
<reference key="1">
    <citation type="journal article" date="1995" name="Nat. Genet.">
        <title>Analysis of the nucleotide sequence of chromosome VI from Saccharomyces cerevisiae.</title>
        <authorList>
            <person name="Murakami Y."/>
            <person name="Naitou M."/>
            <person name="Hagiwara H."/>
            <person name="Shibata T."/>
            <person name="Ozawa M."/>
            <person name="Sasanuma S."/>
            <person name="Sasanuma M."/>
            <person name="Tsuchiya Y."/>
            <person name="Soeda E."/>
            <person name="Yokoyama K."/>
            <person name="Yamazaki M."/>
            <person name="Tashiro H."/>
            <person name="Eki T."/>
        </authorList>
    </citation>
    <scope>NUCLEOTIDE SEQUENCE [LARGE SCALE GENOMIC DNA]</scope>
    <source>
        <strain>ATCC 204508 / S288c</strain>
    </source>
</reference>
<reference key="2">
    <citation type="journal article" date="2014" name="G3 (Bethesda)">
        <title>The reference genome sequence of Saccharomyces cerevisiae: Then and now.</title>
        <authorList>
            <person name="Engel S.R."/>
            <person name="Dietrich F.S."/>
            <person name="Fisk D.G."/>
            <person name="Binkley G."/>
            <person name="Balakrishnan R."/>
            <person name="Costanzo M.C."/>
            <person name="Dwight S.S."/>
            <person name="Hitz B.C."/>
            <person name="Karra K."/>
            <person name="Nash R.S."/>
            <person name="Weng S."/>
            <person name="Wong E.D."/>
            <person name="Lloyd P."/>
            <person name="Skrzypek M.S."/>
            <person name="Miyasato S.R."/>
            <person name="Simison M."/>
            <person name="Cherry J.M."/>
        </authorList>
    </citation>
    <scope>GENOME REANNOTATION</scope>
    <source>
        <strain>ATCC 204508 / S288c</strain>
    </source>
</reference>
<reference key="3">
    <citation type="journal article" date="2007" name="Genome Res.">
        <title>Approaching a complete repository of sequence-verified protein-encoding clones for Saccharomyces cerevisiae.</title>
        <authorList>
            <person name="Hu Y."/>
            <person name="Rolfs A."/>
            <person name="Bhullar B."/>
            <person name="Murthy T.V.S."/>
            <person name="Zhu C."/>
            <person name="Berger M.F."/>
            <person name="Camargo A.A."/>
            <person name="Kelley F."/>
            <person name="McCarron S."/>
            <person name="Jepson D."/>
            <person name="Richardson A."/>
            <person name="Raphael J."/>
            <person name="Moreira D."/>
            <person name="Taycher E."/>
            <person name="Zuo D."/>
            <person name="Mohr S."/>
            <person name="Kane M.F."/>
            <person name="Williamson J."/>
            <person name="Simpson A.J.G."/>
            <person name="Bulyk M.L."/>
            <person name="Harlow E."/>
            <person name="Marsischky G."/>
            <person name="Kolodner R.D."/>
            <person name="LaBaer J."/>
        </authorList>
    </citation>
    <scope>NUCLEOTIDE SEQUENCE [GENOMIC DNA]</scope>
    <source>
        <strain>ATCC 204508 / S288c</strain>
    </source>
</reference>
<reference key="4">
    <citation type="journal article" date="2011" name="Proc. Natl. Acad. Sci. U.S.A.">
        <title>A chemical-genetic screen to unravel the genetic network of CDC28/CDK1 links ubiquitin and Rad6-Bre1 to cell cycle progression.</title>
        <authorList>
            <person name="Zimmermann C."/>
            <person name="Chymkowitch P."/>
            <person name="Eldholm V."/>
            <person name="Putnam C.D."/>
            <person name="Lindvall J.M."/>
            <person name="Omerzu M."/>
            <person name="Bjoras M."/>
            <person name="Kolodner R.D."/>
            <person name="Enserink J.M."/>
        </authorList>
    </citation>
    <scope>DISRUPTION PHENOTYPE</scope>
</reference>
<evidence type="ECO:0000255" key="1"/>
<evidence type="ECO:0000269" key="2">
    <source>
    </source>
</evidence>
<evidence type="ECO:0000305" key="3"/>
<keyword id="KW-0472">Membrane</keyword>
<keyword id="KW-1185">Reference proteome</keyword>
<keyword id="KW-0732">Signal</keyword>
<keyword id="KW-0812">Transmembrane</keyword>
<keyword id="KW-1133">Transmembrane helix</keyword>
<dbReference type="EMBL" id="D50617">
    <property type="protein sequence ID" value="BAA09251.1"/>
    <property type="molecule type" value="Genomic_DNA"/>
</dbReference>
<dbReference type="EMBL" id="AY557808">
    <property type="protein sequence ID" value="AAS56134.1"/>
    <property type="molecule type" value="Genomic_DNA"/>
</dbReference>
<dbReference type="EMBL" id="BK006940">
    <property type="protein sequence ID" value="DAA12452.1"/>
    <property type="molecule type" value="Genomic_DNA"/>
</dbReference>
<dbReference type="PIR" id="S56267">
    <property type="entry name" value="S56267"/>
</dbReference>
<dbReference type="RefSeq" id="NP_116667.1">
    <property type="nucleotide sequence ID" value="NM_001179977.1"/>
</dbReference>
<dbReference type="BioGRID" id="31163">
    <property type="interactions" value="86"/>
</dbReference>
<dbReference type="DIP" id="DIP-3935N"/>
<dbReference type="FunCoup" id="P43595">
    <property type="interactions" value="27"/>
</dbReference>
<dbReference type="IntAct" id="P43595">
    <property type="interactions" value="2"/>
</dbReference>
<dbReference type="STRING" id="4932.YFR012W"/>
<dbReference type="PaxDb" id="4932-YFR012W"/>
<dbReference type="EnsemblFungi" id="YFR012W_mRNA">
    <property type="protein sequence ID" value="YFR012W"/>
    <property type="gene ID" value="YFR012W"/>
</dbReference>
<dbReference type="GeneID" id="850565"/>
<dbReference type="KEGG" id="sce:YFR012W"/>
<dbReference type="AGR" id="SGD:S000001908"/>
<dbReference type="SGD" id="S000001908">
    <property type="gene designation" value="DCV1"/>
</dbReference>
<dbReference type="VEuPathDB" id="FungiDB:YFR012W"/>
<dbReference type="HOGENOM" id="CLU_121101_0_0_1"/>
<dbReference type="InParanoid" id="P43595"/>
<dbReference type="OrthoDB" id="4065301at2759"/>
<dbReference type="BioCyc" id="YEAST:G3O-30465-MONOMER"/>
<dbReference type="BioGRID-ORCS" id="850565">
    <property type="hits" value="7 hits in 10 CRISPR screens"/>
</dbReference>
<dbReference type="PRO" id="PR:P43595"/>
<dbReference type="Proteomes" id="UP000002311">
    <property type="component" value="Chromosome VI"/>
</dbReference>
<dbReference type="RNAct" id="P43595">
    <property type="molecule type" value="protein"/>
</dbReference>
<dbReference type="GO" id="GO:0032153">
    <property type="term" value="C:cell division site"/>
    <property type="evidence" value="ECO:0000318"/>
    <property type="project" value="GO_Central"/>
</dbReference>
<dbReference type="GO" id="GO:0035838">
    <property type="term" value="C:growing cell tip"/>
    <property type="evidence" value="ECO:0000318"/>
    <property type="project" value="GO_Central"/>
</dbReference>
<dbReference type="GO" id="GO:0005635">
    <property type="term" value="C:nuclear envelope"/>
    <property type="evidence" value="ECO:0000314"/>
    <property type="project" value="SGD"/>
</dbReference>
<dbReference type="GO" id="GO:0005886">
    <property type="term" value="C:plasma membrane"/>
    <property type="evidence" value="ECO:0000318"/>
    <property type="project" value="GO_Central"/>
</dbReference>
<dbReference type="InterPro" id="IPR051380">
    <property type="entry name" value="pH-response_reg_palI/RIM9"/>
</dbReference>
<dbReference type="InterPro" id="IPR009571">
    <property type="entry name" value="SUR7/Rim9-like_fungi"/>
</dbReference>
<dbReference type="PANTHER" id="PTHR28013">
    <property type="entry name" value="PROTEIN DCV1-RELATED"/>
    <property type="match status" value="1"/>
</dbReference>
<dbReference type="PANTHER" id="PTHR28013:SF3">
    <property type="entry name" value="PROTEIN DCV1-RELATED"/>
    <property type="match status" value="1"/>
</dbReference>
<dbReference type="Pfam" id="PF06687">
    <property type="entry name" value="SUR7"/>
    <property type="match status" value="1"/>
</dbReference>
<name>DCV1_YEAST</name>
<accession>P43595</accession>
<accession>D6VTP2</accession>
<comment type="subcellular location">
    <subcellularLocation>
        <location evidence="3">Membrane</location>
        <topology evidence="3">Multi-pass membrane protein</topology>
    </subcellularLocation>
</comment>
<comment type="disruption phenotype">
    <text evidence="2">Leads to lethality in absence of CDC28.</text>
</comment>